<keyword id="KW-1185">Reference proteome</keyword>
<keyword id="KW-0687">Ribonucleoprotein</keyword>
<keyword id="KW-0689">Ribosomal protein</keyword>
<keyword id="KW-0694">RNA-binding</keyword>
<keyword id="KW-0699">rRNA-binding</keyword>
<organism>
    <name type="scientific">Trichlorobacter lovleyi (strain ATCC BAA-1151 / DSM 17278 / SZ)</name>
    <name type="common">Geobacter lovleyi</name>
    <dbReference type="NCBI Taxonomy" id="398767"/>
    <lineage>
        <taxon>Bacteria</taxon>
        <taxon>Pseudomonadati</taxon>
        <taxon>Thermodesulfobacteriota</taxon>
        <taxon>Desulfuromonadia</taxon>
        <taxon>Geobacterales</taxon>
        <taxon>Geobacteraceae</taxon>
        <taxon>Trichlorobacter</taxon>
    </lineage>
</organism>
<accession>B3E7U6</accession>
<evidence type="ECO:0000255" key="1">
    <source>
        <dbReference type="HAMAP-Rule" id="MF_01326"/>
    </source>
</evidence>
<evidence type="ECO:0000305" key="2"/>
<feature type="chain" id="PRO_0000355683" description="Large ribosomal subunit protein uL24">
    <location>
        <begin position="1"/>
        <end position="108"/>
    </location>
</feature>
<proteinExistence type="inferred from homology"/>
<sequence>MQTKKYHVAKGDTVMVIAGKEKAKTGKVLQVLPKKDAVIVEGLNMVKRHVRARGNEPGGITEKEAALHVSNVQLYCTKCVKPVRTRIKVLENGEKQRTCVKCDSSLEN</sequence>
<protein>
    <recommendedName>
        <fullName evidence="1">Large ribosomal subunit protein uL24</fullName>
    </recommendedName>
    <alternativeName>
        <fullName evidence="2">50S ribosomal protein L24</fullName>
    </alternativeName>
</protein>
<gene>
    <name evidence="1" type="primary">rplX</name>
    <name type="ordered locus">Glov_1357</name>
</gene>
<name>RL24_TRIL1</name>
<comment type="function">
    <text evidence="1">One of two assembly initiator proteins, it binds directly to the 5'-end of the 23S rRNA, where it nucleates assembly of the 50S subunit.</text>
</comment>
<comment type="function">
    <text evidence="1">One of the proteins that surrounds the polypeptide exit tunnel on the outside of the subunit.</text>
</comment>
<comment type="subunit">
    <text evidence="1">Part of the 50S ribosomal subunit.</text>
</comment>
<comment type="similarity">
    <text evidence="1">Belongs to the universal ribosomal protein uL24 family.</text>
</comment>
<dbReference type="EMBL" id="CP001089">
    <property type="protein sequence ID" value="ACD95078.1"/>
    <property type="molecule type" value="Genomic_DNA"/>
</dbReference>
<dbReference type="RefSeq" id="WP_012469423.1">
    <property type="nucleotide sequence ID" value="NC_010814.1"/>
</dbReference>
<dbReference type="SMR" id="B3E7U6"/>
<dbReference type="STRING" id="398767.Glov_1357"/>
<dbReference type="KEGG" id="glo:Glov_1357"/>
<dbReference type="eggNOG" id="COG0198">
    <property type="taxonomic scope" value="Bacteria"/>
</dbReference>
<dbReference type="HOGENOM" id="CLU_093315_2_3_7"/>
<dbReference type="OrthoDB" id="9807419at2"/>
<dbReference type="Proteomes" id="UP000002420">
    <property type="component" value="Chromosome"/>
</dbReference>
<dbReference type="GO" id="GO:1990904">
    <property type="term" value="C:ribonucleoprotein complex"/>
    <property type="evidence" value="ECO:0007669"/>
    <property type="project" value="UniProtKB-KW"/>
</dbReference>
<dbReference type="GO" id="GO:0005840">
    <property type="term" value="C:ribosome"/>
    <property type="evidence" value="ECO:0007669"/>
    <property type="project" value="UniProtKB-KW"/>
</dbReference>
<dbReference type="GO" id="GO:0019843">
    <property type="term" value="F:rRNA binding"/>
    <property type="evidence" value="ECO:0007669"/>
    <property type="project" value="UniProtKB-UniRule"/>
</dbReference>
<dbReference type="GO" id="GO:0003735">
    <property type="term" value="F:structural constituent of ribosome"/>
    <property type="evidence" value="ECO:0007669"/>
    <property type="project" value="InterPro"/>
</dbReference>
<dbReference type="GO" id="GO:0006412">
    <property type="term" value="P:translation"/>
    <property type="evidence" value="ECO:0007669"/>
    <property type="project" value="UniProtKB-UniRule"/>
</dbReference>
<dbReference type="CDD" id="cd06089">
    <property type="entry name" value="KOW_RPL26"/>
    <property type="match status" value="1"/>
</dbReference>
<dbReference type="Gene3D" id="2.30.30.30">
    <property type="match status" value="1"/>
</dbReference>
<dbReference type="HAMAP" id="MF_01326_B">
    <property type="entry name" value="Ribosomal_uL24_B"/>
    <property type="match status" value="1"/>
</dbReference>
<dbReference type="InterPro" id="IPR005824">
    <property type="entry name" value="KOW"/>
</dbReference>
<dbReference type="InterPro" id="IPR014722">
    <property type="entry name" value="Rib_uL2_dom2"/>
</dbReference>
<dbReference type="InterPro" id="IPR003256">
    <property type="entry name" value="Ribosomal_uL24"/>
</dbReference>
<dbReference type="InterPro" id="IPR041988">
    <property type="entry name" value="Ribosomal_uL24_KOW"/>
</dbReference>
<dbReference type="InterPro" id="IPR008991">
    <property type="entry name" value="Translation_prot_SH3-like_sf"/>
</dbReference>
<dbReference type="NCBIfam" id="TIGR01079">
    <property type="entry name" value="rplX_bact"/>
    <property type="match status" value="1"/>
</dbReference>
<dbReference type="PANTHER" id="PTHR12903">
    <property type="entry name" value="MITOCHONDRIAL RIBOSOMAL PROTEIN L24"/>
    <property type="match status" value="1"/>
</dbReference>
<dbReference type="Pfam" id="PF00467">
    <property type="entry name" value="KOW"/>
    <property type="match status" value="1"/>
</dbReference>
<dbReference type="Pfam" id="PF17136">
    <property type="entry name" value="ribosomal_L24"/>
    <property type="match status" value="1"/>
</dbReference>
<dbReference type="SMART" id="SM00739">
    <property type="entry name" value="KOW"/>
    <property type="match status" value="1"/>
</dbReference>
<dbReference type="SUPFAM" id="SSF50104">
    <property type="entry name" value="Translation proteins SH3-like domain"/>
    <property type="match status" value="1"/>
</dbReference>
<reference key="1">
    <citation type="submission" date="2008-05" db="EMBL/GenBank/DDBJ databases">
        <title>Complete sequence of chromosome of Geobacter lovleyi SZ.</title>
        <authorList>
            <consortium name="US DOE Joint Genome Institute"/>
            <person name="Lucas S."/>
            <person name="Copeland A."/>
            <person name="Lapidus A."/>
            <person name="Glavina del Rio T."/>
            <person name="Dalin E."/>
            <person name="Tice H."/>
            <person name="Bruce D."/>
            <person name="Goodwin L."/>
            <person name="Pitluck S."/>
            <person name="Chertkov O."/>
            <person name="Meincke L."/>
            <person name="Brettin T."/>
            <person name="Detter J.C."/>
            <person name="Han C."/>
            <person name="Tapia R."/>
            <person name="Kuske C.R."/>
            <person name="Schmutz J."/>
            <person name="Larimer F."/>
            <person name="Land M."/>
            <person name="Hauser L."/>
            <person name="Kyrpides N."/>
            <person name="Mikhailova N."/>
            <person name="Sung Y."/>
            <person name="Fletcher K.E."/>
            <person name="Ritalahti K.M."/>
            <person name="Loeffler F.E."/>
            <person name="Richardson P."/>
        </authorList>
    </citation>
    <scope>NUCLEOTIDE SEQUENCE [LARGE SCALE GENOMIC DNA]</scope>
    <source>
        <strain>ATCC BAA-1151 / DSM 17278 / SZ</strain>
    </source>
</reference>